<organism>
    <name type="scientific">Caenorhabditis elegans</name>
    <dbReference type="NCBI Taxonomy" id="6239"/>
    <lineage>
        <taxon>Eukaryota</taxon>
        <taxon>Metazoa</taxon>
        <taxon>Ecdysozoa</taxon>
        <taxon>Nematoda</taxon>
        <taxon>Chromadorea</taxon>
        <taxon>Rhabditida</taxon>
        <taxon>Rhabditina</taxon>
        <taxon>Rhabditomorpha</taxon>
        <taxon>Rhabditoidea</taxon>
        <taxon>Rhabditidae</taxon>
        <taxon>Peloderinae</taxon>
        <taxon>Caenorhabditis</taxon>
    </lineage>
</organism>
<proteinExistence type="evidence at protein level"/>
<gene>
    <name type="primary">flp-1</name>
    <name type="ORF">F23B2.5</name>
</gene>
<sequence length="175" mass="19706">MTLLYQVGLLLLVAATYKVSAECCTPGATSDFCTVFSMLSTMEQNEVMNFIGENCDGDAEVALQKMEKRKPNFMRYGRSAAVKSLGKKAGSDPNFLRFGRSQPNFLRFGKASGDPNFLRFGRSDPNFLRFGKAAADPNFLRFGKRSADPNFLRFGRSFDNFDRESRKPNFLRFGK</sequence>
<feature type="signal peptide" evidence="1">
    <location>
        <begin position="1"/>
        <end position="21"/>
    </location>
</feature>
<feature type="propeptide" id="PRO_0000009545">
    <location>
        <begin position="22"/>
        <end position="68"/>
    </location>
</feature>
<feature type="peptide" id="PRO_0000009546" description="PNFMRY-amide">
    <location>
        <begin position="71"/>
        <end position="76"/>
    </location>
</feature>
<feature type="propeptide" id="PRO_0000009547">
    <location>
        <begin position="79"/>
        <end position="86"/>
    </location>
</feature>
<feature type="peptide" id="PRO_0000009548" description="AGSDPNFLRF-amide">
    <location>
        <begin position="89"/>
        <end position="98"/>
    </location>
</feature>
<feature type="peptide" id="PRO_0000009549" description="SQPNFLRF-amide">
    <location>
        <begin position="101"/>
        <end position="108"/>
    </location>
</feature>
<feature type="peptide" id="PRO_0000009550" description="ASGDPNFLRF-amide">
    <location>
        <begin position="111"/>
        <end position="120"/>
    </location>
</feature>
<feature type="peptide" id="PRO_0000009551" description="SDPNFLRF-amide">
    <location>
        <begin position="123"/>
        <end position="130"/>
    </location>
</feature>
<feature type="peptide" id="PRO_0000009552" description="AAADPNFLRF-amide">
    <location>
        <begin position="133"/>
        <end position="142"/>
    </location>
</feature>
<feature type="peptide" id="PRO_0000009553" description="SADPNFLRF-amide">
    <location>
        <begin position="146"/>
        <end position="154"/>
    </location>
</feature>
<feature type="propeptide" id="PRO_0000009554">
    <location>
        <begin position="157"/>
        <end position="165"/>
    </location>
</feature>
<feature type="peptide" id="PRO_0000009555" description="PNFLRF-amide" evidence="7">
    <location>
        <begin position="168"/>
        <end position="173"/>
    </location>
</feature>
<feature type="modified residue" description="Tyrosine amide" evidence="8">
    <location>
        <position position="76"/>
    </location>
</feature>
<feature type="modified residue" description="Phenylalanine amide" evidence="8">
    <location>
        <position position="98"/>
    </location>
</feature>
<feature type="modified residue" description="Phenylalanine amide" evidence="8">
    <location>
        <position position="108"/>
    </location>
</feature>
<feature type="modified residue" description="Phenylalanine amide" evidence="8">
    <location>
        <position position="120"/>
    </location>
</feature>
<feature type="modified residue" description="Phenylalanine amide" evidence="8">
    <location>
        <position position="130"/>
    </location>
</feature>
<feature type="modified residue" description="Phenylalanine amide" evidence="3 8">
    <location>
        <position position="142"/>
    </location>
</feature>
<feature type="modified residue" description="Phenylalanine amide" evidence="3 8">
    <location>
        <position position="154"/>
    </location>
</feature>
<feature type="modified residue" description="Phenylalanine amide" evidence="7 8">
    <location>
        <position position="173"/>
    </location>
</feature>
<feature type="splice variant" id="VSP_020150" description="In isoform c." evidence="9">
    <location>
        <begin position="81"/>
        <end position="113"/>
    </location>
</feature>
<feature type="splice variant" id="VSP_001563" description="In isoform b." evidence="9">
    <location>
        <begin position="81"/>
        <end position="91"/>
    </location>
</feature>
<comment type="function">
    <text evidence="6">Together with flp-18, plays a homeostatic role by acting on the GABAergic neural transmission at neuromuscular junctions to prevent overexcitation of the locomotor circuit.</text>
</comment>
<comment type="function">
    <molecule>SADPNFLRF-amide</molecule>
    <text evidence="4">Inhibits the activity of dissected pharyngeal myogenic muscle system.</text>
</comment>
<comment type="function">
    <text evidence="4">DPNFLRF-amide: Inhibits the activity of dissected pharyngeal myogenic muscle system.</text>
</comment>
<comment type="function">
    <molecule>PNFMRY-amide</molecule>
    <text evidence="5">Acts as a ligand for the npr-22 receptor in vitro.</text>
</comment>
<comment type="subcellular location">
    <subcellularLocation>
        <location>Secreted</location>
    </subcellularLocation>
</comment>
<comment type="alternative products">
    <event type="alternative splicing"/>
    <isoform>
        <id>P41855-1</id>
        <name>a</name>
        <sequence type="displayed"/>
    </isoform>
    <isoform>
        <id>P41855-2</id>
        <name>b</name>
        <sequence type="described" ref="VSP_001563"/>
    </isoform>
    <isoform>
        <id>P41855-3</id>
        <name>c</name>
        <sequence type="described" ref="VSP_020150"/>
    </isoform>
</comment>
<comment type="tissue specificity">
    <text evidence="2">Each flp gene is expressed in a distinct set of neurons. Flp-1 is expressed in the AVA interneurons, the M5 cholinergic pharyngeal motoneurons, and the AIA, AIY, AVE, AVK, RIG and RMG neurons.</text>
</comment>
<comment type="PTM">
    <text evidence="10">May be processed by convertase egl-3.</text>
</comment>
<comment type="mass spectrometry" mass="1065.0" method="Electrospray" evidence="8">
    <molecule>SADPNFLRF-amide</molecule>
</comment>
<comment type="mass spectrometry" mass="1007.0" method="Electrospray" evidence="8">
    <molecule>SQPNFLRF-amide</molecule>
</comment>
<comment type="mass spectrometry" mass="1123.0" method="Electrospray" evidence="8">
    <molecule>ASGDPNFLRF-amide</molecule>
</comment>
<comment type="mass spectrometry" mass="994.0" method="Electrospray" evidence="8">
    <molecule>SDPNFLRF-amide</molecule>
</comment>
<comment type="mass spectrometry" mass="1122.0" method="Electrospray" evidence="8">
    <molecule>AAADPNFLRF-amide</molecule>
</comment>
<comment type="mass spectrometry" mass="791.8" method="Electrospray" evidence="8">
    <molecule>PNFLRF-amide</molecule>
</comment>
<comment type="mass spectrometry" mass="792.29" method="MALDI" evidence="7">
    <molecule>PNFLRF-amide</molecule>
</comment>
<comment type="miscellaneous">
    <molecule>Isoform b</molecule>
    <text evidence="9">Expressed at about a twofold higher level than isoform Long.</text>
</comment>
<comment type="similarity">
    <text evidence="9">Belongs to the FARP (FMRFamide related peptide) family.</text>
</comment>
<accession>P41855</accession>
<accession>Q7JKL0</accession>
<accession>Q8I122</accession>
<reference key="1">
    <citation type="journal article" date="1992" name="J. Neurosci.">
        <title>Alternatively spliced transcripts of the flp-1 gene encode distinct FMRFamide-like peptides in Caenorhabditis elegans.</title>
        <authorList>
            <person name="Rosoff M.L."/>
            <person name="Buerglin T.R."/>
            <person name="Li C."/>
        </authorList>
    </citation>
    <scope>NUCLEOTIDE SEQUENCE [GENOMIC DNA]</scope>
    <scope>ALTERNATIVE SPLICING (ISOFORMS A AND B)</scope>
    <source>
        <strain>Bristol N2</strain>
    </source>
</reference>
<reference key="2">
    <citation type="journal article" date="1998" name="Science">
        <title>Genome sequence of the nematode C. elegans: a platform for investigating biology.</title>
        <authorList>
            <consortium name="The C. elegans sequencing consortium"/>
        </authorList>
    </citation>
    <scope>NUCLEOTIDE SEQUENCE [LARGE SCALE GENOMIC DNA]</scope>
    <scope>ALTERNATIVE SPLICING</scope>
    <source>
        <strain>Bristol N2</strain>
    </source>
</reference>
<reference key="3">
    <citation type="journal article" date="1993" name="Peptides">
        <title>The flp-1 propeptide is processed into multiple, highly similar FMRFamide-like peptides in Caenorhabditis elegans.</title>
        <authorList>
            <person name="Rosoff M.L."/>
            <person name="Doble K.E."/>
            <person name="Price D.A."/>
            <person name="Li C."/>
        </authorList>
    </citation>
    <scope>PROTEIN SEQUENCE OF 71-76; 89-98; 101-108; 111-120; 123-130; 133-142; 146-154 AND 168-173</scope>
    <scope>MASS SPECTROMETRY</scope>
    <scope>AMIDATION AT TYR-76; PHE-98; PHE-108; PHE-120; PHE-130; PHE-142; PHE-154 AND PHE-173</scope>
</reference>
<reference key="4">
    <citation type="journal article" date="2005" name="Biochem. Biophys. Res. Commun.">
        <title>Discovering neuropeptides in Caenorhabditis elegans by two dimensional liquid chromatography and mass spectrometry.</title>
        <authorList>
            <person name="Husson S.J."/>
            <person name="Clynen E."/>
            <person name="Baggerman G."/>
            <person name="De Loof A."/>
            <person name="Schoofs L."/>
        </authorList>
    </citation>
    <scope>PROTEIN SEQUENCE OF 133-142 AND 146-154</scope>
    <scope>AMIDATION AT PHE-142 AND PHE-154</scope>
    <source>
        <strain>Bristol N2</strain>
    </source>
</reference>
<reference key="5">
    <citation type="journal article" date="2017" name="Elife">
        <title>Luqin-like RYamide peptides regulate food-evoked responses in C. elegans.</title>
        <authorList>
            <person name="Ohno H."/>
            <person name="Yoshida M."/>
            <person name="Sato T."/>
            <person name="Kato J."/>
            <person name="Miyazato M."/>
            <person name="Kojima M."/>
            <person name="Ida T."/>
            <person name="Iino Y."/>
        </authorList>
    </citation>
    <scope>PROTEIN SEQUENCE OF 168-173</scope>
    <scope>AMIDATION AT PHE-173</scope>
    <scope>MASS SPECTROMETRY</scope>
</reference>
<reference key="6">
    <citation type="journal article" date="2004" name="J. Comp. Neurol.">
        <title>Expression and regulation of an FMRFamide-related neuropeptide gene family in Caenorhabditis elegans.</title>
        <authorList>
            <person name="Kim K."/>
            <person name="Li C."/>
        </authorList>
    </citation>
    <scope>TISSUE SPECIFICITY</scope>
</reference>
<reference key="7">
    <citation type="journal article" date="2005" name="J. Neurobiol.">
        <title>Role of a FMRFamide-like family of neuropeptides in the pharyngeal nervous system of Caenorhabditis elegans.</title>
        <authorList>
            <person name="Papaioannou S."/>
            <person name="Marsden D."/>
            <person name="Franks C.J."/>
            <person name="Walker R.J."/>
            <person name="Holden-Dye L."/>
        </authorList>
    </citation>
    <scope>FUNCTION</scope>
</reference>
<reference key="8">
    <citation type="journal article" date="2006" name="Peptides">
        <title>FMRFamide related peptide ligands activate the Caenorhabditis elegans orphan GPCR Y59H11AL.1.</title>
        <authorList>
            <person name="Mertens I."/>
            <person name="Clinckspoor I."/>
            <person name="Janssen T."/>
            <person name="Nachman R."/>
            <person name="Schoofs L."/>
        </authorList>
    </citation>
    <scope>FUNCTION (PNFMRY-AMIDE)</scope>
</reference>
<reference key="9">
    <citation type="journal article" date="2013" name="PLoS Genet.">
        <title>Neuropeptides function in a homeostatic manner to modulate excitation-inhibition imbalance in C. elegans.</title>
        <authorList>
            <person name="Stawicki T.M."/>
            <person name="Takayanagi-Kiya S."/>
            <person name="Zhou K."/>
            <person name="Jin Y."/>
        </authorList>
    </citation>
    <scope>FUNCTION</scope>
    <scope>PROTEOLYTIC CLEAVAGE</scope>
</reference>
<dbReference type="EMBL" id="S38096">
    <property type="protein sequence ID" value="AAB22368.1"/>
    <property type="molecule type" value="Genomic_DNA"/>
</dbReference>
<dbReference type="EMBL" id="U00670">
    <property type="protein sequence ID" value="AAC46464.1"/>
    <property type="molecule type" value="Genomic_DNA"/>
</dbReference>
<dbReference type="EMBL" id="Z82266">
    <property type="protein sequence ID" value="CAB05179.1"/>
    <property type="molecule type" value="Genomic_DNA"/>
</dbReference>
<dbReference type="EMBL" id="Z82266">
    <property type="protein sequence ID" value="CAD56243.1"/>
    <property type="molecule type" value="Genomic_DNA"/>
</dbReference>
<dbReference type="EMBL" id="Z82266">
    <property type="protein sequence ID" value="CAD56244.1"/>
    <property type="molecule type" value="Genomic_DNA"/>
</dbReference>
<dbReference type="PIR" id="B44827">
    <property type="entry name" value="B44827"/>
</dbReference>
<dbReference type="PIR" id="T21297">
    <property type="entry name" value="T21297"/>
</dbReference>
<dbReference type="RefSeq" id="NP_501592.1">
    <molecule id="P41855-1"/>
    <property type="nucleotide sequence ID" value="NM_069191.8"/>
</dbReference>
<dbReference type="RefSeq" id="NP_872077.1">
    <molecule id="P41855-2"/>
    <property type="nucleotide sequence ID" value="NM_182277.9"/>
</dbReference>
<dbReference type="RefSeq" id="NP_872078.1">
    <molecule id="P41855-3"/>
    <property type="nucleotide sequence ID" value="NM_182278.7"/>
</dbReference>
<dbReference type="BioGRID" id="42843">
    <property type="interactions" value="9"/>
</dbReference>
<dbReference type="FunCoup" id="P41855">
    <property type="interactions" value="1256"/>
</dbReference>
<dbReference type="STRING" id="6239.F23B2.5a.1"/>
<dbReference type="PaxDb" id="6239-F23B2.5a"/>
<dbReference type="EnsemblMetazoa" id="F23B2.5a.1">
    <molecule id="P41855-1"/>
    <property type="protein sequence ID" value="F23B2.5a.1"/>
    <property type="gene ID" value="WBGene00001444"/>
</dbReference>
<dbReference type="EnsemblMetazoa" id="F23B2.5b.1">
    <molecule id="P41855-2"/>
    <property type="protein sequence ID" value="F23B2.5b.1"/>
    <property type="gene ID" value="WBGene00001444"/>
</dbReference>
<dbReference type="EnsemblMetazoa" id="F23B2.5c.1">
    <molecule id="P41855-3"/>
    <property type="protein sequence ID" value="F23B2.5c.1"/>
    <property type="gene ID" value="WBGene00001444"/>
</dbReference>
<dbReference type="GeneID" id="177737"/>
<dbReference type="KEGG" id="cel:CELE_F23B2.5"/>
<dbReference type="UCSC" id="F23B2.5a">
    <molecule id="P41855-1"/>
    <property type="organism name" value="c. elegans"/>
</dbReference>
<dbReference type="AGR" id="WB:WBGene00001444"/>
<dbReference type="CTD" id="177737"/>
<dbReference type="WormBase" id="F23B2.5a">
    <molecule id="P41855-1"/>
    <property type="protein sequence ID" value="CE09585"/>
    <property type="gene ID" value="WBGene00001444"/>
    <property type="gene designation" value="flp-1"/>
</dbReference>
<dbReference type="WormBase" id="F23B2.5b">
    <molecule id="P41855-2"/>
    <property type="protein sequence ID" value="CE32045"/>
    <property type="gene ID" value="WBGene00001444"/>
    <property type="gene designation" value="flp-1"/>
</dbReference>
<dbReference type="WormBase" id="F23B2.5c">
    <molecule id="P41855-3"/>
    <property type="protein sequence ID" value="CE32046"/>
    <property type="gene ID" value="WBGene00001444"/>
    <property type="gene designation" value="flp-1"/>
</dbReference>
<dbReference type="eggNOG" id="ENOG502SDD0">
    <property type="taxonomic scope" value="Eukaryota"/>
</dbReference>
<dbReference type="GeneTree" id="ENSGT00970000196033"/>
<dbReference type="InParanoid" id="P41855"/>
<dbReference type="OMA" id="GRNQPNF"/>
<dbReference type="OrthoDB" id="5813613at2759"/>
<dbReference type="PhylomeDB" id="P41855"/>
<dbReference type="PRO" id="PR:P41855"/>
<dbReference type="Proteomes" id="UP000001940">
    <property type="component" value="Chromosome IV"/>
</dbReference>
<dbReference type="Bgee" id="WBGene00001444">
    <property type="expression patterns" value="Expressed in larva and 3 other cell types or tissues"/>
</dbReference>
<dbReference type="GO" id="GO:0005576">
    <property type="term" value="C:extracellular region"/>
    <property type="evidence" value="ECO:0007669"/>
    <property type="project" value="UniProtKB-SubCell"/>
</dbReference>
<dbReference type="GO" id="GO:0071855">
    <property type="term" value="F:neuropeptide receptor binding"/>
    <property type="evidence" value="ECO:0000314"/>
    <property type="project" value="WormBase"/>
</dbReference>
<dbReference type="GO" id="GO:0006972">
    <property type="term" value="P:hyperosmotic response"/>
    <property type="evidence" value="ECO:0000315"/>
    <property type="project" value="WormBase"/>
</dbReference>
<dbReference type="GO" id="GO:0007626">
    <property type="term" value="P:locomotory behavior"/>
    <property type="evidence" value="ECO:0000315"/>
    <property type="project" value="WormBase"/>
</dbReference>
<dbReference type="GO" id="GO:0007638">
    <property type="term" value="P:mechanosensory behavior"/>
    <property type="evidence" value="ECO:0000315"/>
    <property type="project" value="WormBase"/>
</dbReference>
<dbReference type="GO" id="GO:0007218">
    <property type="term" value="P:neuropeptide signaling pathway"/>
    <property type="evidence" value="ECO:0000314"/>
    <property type="project" value="WormBase"/>
</dbReference>
<dbReference type="GO" id="GO:0046662">
    <property type="term" value="P:regulation of egg-laying behavior"/>
    <property type="evidence" value="ECO:0000315"/>
    <property type="project" value="WormBase"/>
</dbReference>
<dbReference type="GO" id="GO:0006937">
    <property type="term" value="P:regulation of muscle contraction"/>
    <property type="evidence" value="ECO:0000316"/>
    <property type="project" value="UniProtKB"/>
</dbReference>
<dbReference type="GO" id="GO:1904014">
    <property type="term" value="P:response to serotonin"/>
    <property type="evidence" value="ECO:0000315"/>
    <property type="project" value="UniProtKB"/>
</dbReference>
<dbReference type="InterPro" id="IPR002544">
    <property type="entry name" value="FMRFamid-related_peptide-like"/>
</dbReference>
<dbReference type="InterPro" id="IPR051041">
    <property type="entry name" value="FMRFamide-related_np"/>
</dbReference>
<dbReference type="PANTHER" id="PTHR20986:SF24">
    <property type="entry name" value="FMRFAMIDE-LIKE NEUROPEPTIDES 1"/>
    <property type="match status" value="1"/>
</dbReference>
<dbReference type="PANTHER" id="PTHR20986">
    <property type="entry name" value="FMRFAMIDE-RELATED PEPTIDES"/>
    <property type="match status" value="1"/>
</dbReference>
<dbReference type="Pfam" id="PF01581">
    <property type="entry name" value="FARP"/>
    <property type="match status" value="8"/>
</dbReference>
<name>FLP01_CAEEL</name>
<protein>
    <recommendedName>
        <fullName>FMRFamide-like neuropeptides 1</fullName>
    </recommendedName>
    <component>
        <recommendedName>
            <fullName>PNFMRY-amide</fullName>
        </recommendedName>
    </component>
    <component>
        <recommendedName>
            <fullName>AGSDPNFLRF-amide</fullName>
        </recommendedName>
    </component>
    <component>
        <recommendedName>
            <fullName>SQPNFLRF-amide</fullName>
        </recommendedName>
    </component>
    <component>
        <recommendedName>
            <fullName>ASGDPNFLRF-amide</fullName>
        </recommendedName>
    </component>
    <component>
        <recommendedName>
            <fullName>SDPNFLRF-amide</fullName>
        </recommendedName>
        <alternativeName>
            <fullName>PF1</fullName>
        </alternativeName>
    </component>
    <component>
        <recommendedName>
            <fullName>AAADPNFLRF-amide</fullName>
        </recommendedName>
    </component>
    <component>
        <recommendedName>
            <fullName>SADPNFLRF-amide</fullName>
        </recommendedName>
        <alternativeName>
            <fullName>PF2</fullName>
        </alternativeName>
    </component>
    <component>
        <recommendedName>
            <fullName>PNFLRF-amide</fullName>
        </recommendedName>
    </component>
</protein>
<keyword id="KW-0025">Alternative splicing</keyword>
<keyword id="KW-0027">Amidation</keyword>
<keyword id="KW-0165">Cleavage on pair of basic residues</keyword>
<keyword id="KW-0903">Direct protein sequencing</keyword>
<keyword id="KW-0527">Neuropeptide</keyword>
<keyword id="KW-1185">Reference proteome</keyword>
<keyword id="KW-0677">Repeat</keyword>
<keyword id="KW-0964">Secreted</keyword>
<keyword id="KW-0732">Signal</keyword>
<evidence type="ECO:0000255" key="1"/>
<evidence type="ECO:0000269" key="2">
    <source>
    </source>
</evidence>
<evidence type="ECO:0000269" key="3">
    <source>
    </source>
</evidence>
<evidence type="ECO:0000269" key="4">
    <source>
    </source>
</evidence>
<evidence type="ECO:0000269" key="5">
    <source>
    </source>
</evidence>
<evidence type="ECO:0000269" key="6">
    <source>
    </source>
</evidence>
<evidence type="ECO:0000269" key="7">
    <source>
    </source>
</evidence>
<evidence type="ECO:0000269" key="8">
    <source>
    </source>
</evidence>
<evidence type="ECO:0000305" key="9"/>
<evidence type="ECO:0000305" key="10">
    <source>
    </source>
</evidence>